<keyword id="KW-0929">Antimicrobial</keyword>
<keyword id="KW-0903">Direct protein sequencing</keyword>
<keyword id="KW-1015">Disulfide bond</keyword>
<keyword id="KW-0964">Secreted</keyword>
<sequence length="30" mass="3092">GILLDKLKNFAKGVAQSLLNKASCALSGQC</sequence>
<dbReference type="GO" id="GO:0005576">
    <property type="term" value="C:extracellular region"/>
    <property type="evidence" value="ECO:0000314"/>
    <property type="project" value="UniProtKB"/>
</dbReference>
<dbReference type="GO" id="GO:0006952">
    <property type="term" value="P:defense response"/>
    <property type="evidence" value="ECO:0007669"/>
    <property type="project" value="InterPro"/>
</dbReference>
<dbReference type="InterPro" id="IPR012521">
    <property type="entry name" value="Antimicrobial_frog_2"/>
</dbReference>
<dbReference type="Pfam" id="PF08023">
    <property type="entry name" value="Antimicrobial_2"/>
    <property type="match status" value="1"/>
</dbReference>
<organism>
    <name type="scientific">Pelophylax ridibundus</name>
    <name type="common">Marsh frog</name>
    <name type="synonym">Rana ridibunda</name>
    <dbReference type="NCBI Taxonomy" id="8406"/>
    <lineage>
        <taxon>Eukaryota</taxon>
        <taxon>Metazoa</taxon>
        <taxon>Chordata</taxon>
        <taxon>Craniata</taxon>
        <taxon>Vertebrata</taxon>
        <taxon>Euteleostomi</taxon>
        <taxon>Amphibia</taxon>
        <taxon>Batrachia</taxon>
        <taxon>Anura</taxon>
        <taxon>Neobatrachia</taxon>
        <taxon>Ranoidea</taxon>
        <taxon>Ranidae</taxon>
        <taxon>Pelophylax</taxon>
    </lineage>
</organism>
<accession>C0HL01</accession>
<proteinExistence type="evidence at protein level"/>
<reference evidence="4" key="1">
    <citation type="journal article" date="2017" name="Anal. Bioanal. Chem.">
        <title>Differentiation of frogs from two populations belonging to the Pelophylax esculentus complex by LC-MS/MS comparison of their skin peptidomes.</title>
        <authorList>
            <person name="Samgina T.Y."/>
            <person name="Artemenko K.A."/>
            <person name="Bergquist J."/>
            <person name="Trebse P."/>
            <person name="Torkar G."/>
            <person name="Tolpina M.D."/>
            <person name="Lebedev A.T."/>
        </authorList>
    </citation>
    <scope>PROTEIN SEQUENCE</scope>
    <scope>SUBCELLULAR LOCATION</scope>
    <scope>MASS SPECTROMETRY</scope>
    <scope>IDENTIFICATION BY MASS SPECTROMETRY</scope>
    <source>
        <tissue evidence="3">Skin secretion</tissue>
    </source>
</reference>
<feature type="peptide" id="PRO_0000442761" description="Brevinin-2Rg" evidence="2">
    <location>
        <begin position="1"/>
        <end position="30"/>
    </location>
</feature>
<feature type="disulfide bond" evidence="2">
    <location>
        <begin position="24"/>
        <end position="30"/>
    </location>
</feature>
<protein>
    <recommendedName>
        <fullName evidence="3">Brevinin-2Rg</fullName>
    </recommendedName>
</protein>
<name>BR2G_PELRI</name>
<evidence type="ECO:0000250" key="1">
    <source>
        <dbReference type="UniProtKB" id="P0C8S9"/>
    </source>
</evidence>
<evidence type="ECO:0000269" key="2">
    <source>
    </source>
</evidence>
<evidence type="ECO:0000303" key="3">
    <source>
    </source>
</evidence>
<evidence type="ECO:0000305" key="4"/>
<evidence type="ECO:0000305" key="5">
    <source>
    </source>
</evidence>
<comment type="function">
    <text evidence="1">Antimicrobial peptide.</text>
</comment>
<comment type="subcellular location">
    <subcellularLocation>
        <location evidence="2">Secreted</location>
    </subcellularLocation>
</comment>
<comment type="tissue specificity">
    <text evidence="5">Expressed by the skin glands.</text>
</comment>
<comment type="mass spectrometry" mass="3087.7" method="Electrospray" evidence="2"/>
<comment type="similarity">
    <text evidence="4">Belongs to the frog skin active peptide (FSAP) family. Brevinin subfamily.</text>
</comment>